<feature type="initiator methionine" description="Removed" evidence="3">
    <location>
        <position position="1"/>
    </location>
</feature>
<feature type="chain" id="PRO_0000199226" description="Phycobilisome 34.5 kDa linker polypeptide, phycoerythrocyanin-associated, rod">
    <location>
        <begin position="2"/>
        <end position="279"/>
    </location>
</feature>
<feature type="domain" description="PBS-linker" evidence="2">
    <location>
        <begin position="2"/>
        <end position="178"/>
    </location>
</feature>
<feature type="domain" description="CpcD-like" evidence="1">
    <location>
        <begin position="226"/>
        <end position="278"/>
    </location>
</feature>
<feature type="sequence conflict" description="In Ref. 3; AA sequence." evidence="4" ref="3">
    <original>TS</original>
    <variation>VG</variation>
    <location>
        <begin position="219"/>
        <end position="220"/>
    </location>
</feature>
<reference key="1">
    <citation type="submission" date="1992-01" db="EMBL/GenBank/DDBJ databases">
        <title>Structure and molecular evolution of the gene cluster encoding proteins of the rod substructure of the phycobilisome from the cyanobacterium Mastigocadus laminosus.</title>
        <authorList>
            <person name="Kufer W."/>
            <person name="Hoegner A."/>
            <person name="Eberlein M."/>
            <person name="Mayer K."/>
            <person name="Buchner A."/>
            <person name="Gottschalk L."/>
        </authorList>
    </citation>
    <scope>NUCLEOTIDE SEQUENCE [GENOMIC DNA]</scope>
</reference>
<reference key="2">
    <citation type="journal article" date="1990" name="Gene">
        <title>Genes encoding both subunits of phycoerythrocyanin, a light-harvesting biliprotein from the cyanobacterium Mastigocladus laminosus.</title>
        <authorList>
            <person name="Eberlein M."/>
            <person name="Kufer W."/>
        </authorList>
    </citation>
    <scope>NUCLEOTIDE SEQUENCE [GENOMIC DNA] OF 1-58</scope>
</reference>
<reference key="3">
    <citation type="journal article" date="1985" name="Biol. Chem. Hoppe-Seyler">
        <title>Linker polypeptides of the phycobilisome from the cyanobacterium Mastigocladus laminosus: amino-acid sequences and relationships.</title>
        <authorList>
            <person name="Fueglistaller P."/>
            <person name="Suter F."/>
            <person name="Zuber H."/>
        </authorList>
    </citation>
    <scope>PROTEIN SEQUENCE OF 2-45; 158-220 AND 228-279</scope>
</reference>
<sequence length="279" mass="31492">MSTSVAERLAIKDEVDKKIELRPNWSEDELQIVFKTAYEQVFGRQGLYASQRFATAEALLRNGKISVKQFIELLAKSEFYKECFFYNNSQVRFIELNYKHLLGRAPYDQSEIAFHVDLYAAAGYDAEIESYIYSPEYDNAFGNFVVPYYRGFQSIPGMKTVGFNRIFELYRGRANSDNAQFGGKSARLRSKISMNLANTIVPPTSPIAASTSSARTLVTSPVMGDARMFIVEAIAGTLNTNVAVRRSRQVYTVPYDRLSATYQEIHKRGGKIVKITPAS</sequence>
<comment type="function">
    <text>Rod linker protein, associated with phycoerythrocyanin. Linker polypeptides determine the state of aggregation and the location of the disk-shaped phycobiliprotein units within the phycobilisome and modulate their spectroscopic properties in order to mediate a directed and optimal energy transfer.</text>
</comment>
<comment type="subcellular location">
    <subcellularLocation>
        <location>Cellular thylakoid membrane</location>
        <topology>Peripheral membrane protein</topology>
        <orientation>Cytoplasmic side</orientation>
    </subcellularLocation>
    <text>This protein occurs in the rod, it is associated with phycoerythrocyanin.</text>
</comment>
<comment type="similarity">
    <text evidence="2">Belongs to the phycobilisome linker protein family.</text>
</comment>
<gene>
    <name type="primary">pecC</name>
</gene>
<name>PYR2_MASLA</name>
<keyword id="KW-0042">Antenna complex</keyword>
<keyword id="KW-0903">Direct protein sequencing</keyword>
<keyword id="KW-0472">Membrane</keyword>
<keyword id="KW-0602">Photosynthesis</keyword>
<keyword id="KW-0605">Phycobilisome</keyword>
<keyword id="KW-0793">Thylakoid</keyword>
<protein>
    <recommendedName>
        <fullName>Phycobilisome 34.5 kDa linker polypeptide, phycoerythrocyanin-associated, rod</fullName>
    </recommendedName>
</protein>
<organism>
    <name type="scientific">Mastigocladus laminosus</name>
    <name type="common">Fischerella sp.</name>
    <dbReference type="NCBI Taxonomy" id="83541"/>
    <lineage>
        <taxon>Bacteria</taxon>
        <taxon>Bacillati</taxon>
        <taxon>Cyanobacteriota</taxon>
        <taxon>Cyanophyceae</taxon>
        <taxon>Nostocales</taxon>
        <taxon>Hapalosiphonaceae</taxon>
        <taxon>Mastigocladus</taxon>
    </lineage>
</organism>
<evidence type="ECO:0000255" key="1">
    <source>
        <dbReference type="PROSITE-ProRule" id="PRU00771"/>
    </source>
</evidence>
<evidence type="ECO:0000255" key="2">
    <source>
        <dbReference type="PROSITE-ProRule" id="PRU00775"/>
    </source>
</evidence>
<evidence type="ECO:0000269" key="3">
    <source>
    </source>
</evidence>
<evidence type="ECO:0000305" key="4"/>
<accession>P11399</accession>
<dbReference type="EMBL" id="M75599">
    <property type="protein sequence ID" value="AAC64646.1"/>
    <property type="molecule type" value="Genomic_DNA"/>
</dbReference>
<dbReference type="EMBL" id="M34254">
    <property type="protein sequence ID" value="AAC64655.1"/>
    <property type="molecule type" value="Genomic_DNA"/>
</dbReference>
<dbReference type="PIR" id="B24691">
    <property type="entry name" value="B24691"/>
</dbReference>
<dbReference type="PIR" id="PQ0129">
    <property type="entry name" value="PQ0129"/>
</dbReference>
<dbReference type="SMR" id="P11399"/>
<dbReference type="GO" id="GO:0030089">
    <property type="term" value="C:phycobilisome"/>
    <property type="evidence" value="ECO:0007669"/>
    <property type="project" value="UniProtKB-KW"/>
</dbReference>
<dbReference type="GO" id="GO:0031676">
    <property type="term" value="C:plasma membrane-derived thylakoid membrane"/>
    <property type="evidence" value="ECO:0007669"/>
    <property type="project" value="UniProtKB-SubCell"/>
</dbReference>
<dbReference type="GO" id="GO:0015979">
    <property type="term" value="P:photosynthesis"/>
    <property type="evidence" value="ECO:0007669"/>
    <property type="project" value="UniProtKB-KW"/>
</dbReference>
<dbReference type="Gene3D" id="1.10.3130.20">
    <property type="entry name" value="Phycobilisome linker domain"/>
    <property type="match status" value="1"/>
</dbReference>
<dbReference type="InterPro" id="IPR008213">
    <property type="entry name" value="CpcD-like_dom"/>
</dbReference>
<dbReference type="InterPro" id="IPR001297">
    <property type="entry name" value="PBS_linker_dom"/>
</dbReference>
<dbReference type="InterPro" id="IPR038255">
    <property type="entry name" value="PBS_linker_sf"/>
</dbReference>
<dbReference type="InterPro" id="IPR016470">
    <property type="entry name" value="Phycobilisome"/>
</dbReference>
<dbReference type="PANTHER" id="PTHR34011:SF6">
    <property type="entry name" value="PHYCOBILIPROTEIN APCE"/>
    <property type="match status" value="1"/>
</dbReference>
<dbReference type="PANTHER" id="PTHR34011">
    <property type="entry name" value="PHYCOBILISOME 32.1 KDA LINKER POLYPEPTIDE, PHYCOCYANIN-ASSOCIATED, ROD 2-RELATED"/>
    <property type="match status" value="1"/>
</dbReference>
<dbReference type="Pfam" id="PF01383">
    <property type="entry name" value="CpcD"/>
    <property type="match status" value="1"/>
</dbReference>
<dbReference type="Pfam" id="PF00427">
    <property type="entry name" value="PBS_linker_poly"/>
    <property type="match status" value="1"/>
</dbReference>
<dbReference type="PIRSF" id="PIRSF005898">
    <property type="entry name" value="Phycobilisome_CpeC/CpcI"/>
    <property type="match status" value="1"/>
</dbReference>
<dbReference type="SMART" id="SM01094">
    <property type="entry name" value="CpcD"/>
    <property type="match status" value="1"/>
</dbReference>
<dbReference type="PROSITE" id="PS51441">
    <property type="entry name" value="CPCD_LIKE"/>
    <property type="match status" value="1"/>
</dbReference>
<dbReference type="PROSITE" id="PS51445">
    <property type="entry name" value="PBS_LINKER"/>
    <property type="match status" value="1"/>
</dbReference>
<proteinExistence type="evidence at protein level"/>